<proteinExistence type="inferred from homology"/>
<accession>Q741Q2</accession>
<dbReference type="EC" id="3.1.21.10" evidence="1"/>
<dbReference type="EMBL" id="AE016958">
    <property type="protein sequence ID" value="AAS03353.1"/>
    <property type="molecule type" value="Genomic_DNA"/>
</dbReference>
<dbReference type="RefSeq" id="WP_003877574.1">
    <property type="nucleotide sequence ID" value="NZ_CP106873.1"/>
</dbReference>
<dbReference type="SMR" id="Q741Q2"/>
<dbReference type="STRING" id="262316.MAP_1036"/>
<dbReference type="GeneID" id="75270871"/>
<dbReference type="KEGG" id="mpa:MAP_1036"/>
<dbReference type="eggNOG" id="COG0817">
    <property type="taxonomic scope" value="Bacteria"/>
</dbReference>
<dbReference type="HOGENOM" id="CLU_091257_0_2_11"/>
<dbReference type="Proteomes" id="UP000000580">
    <property type="component" value="Chromosome"/>
</dbReference>
<dbReference type="GO" id="GO:0005737">
    <property type="term" value="C:cytoplasm"/>
    <property type="evidence" value="ECO:0007669"/>
    <property type="project" value="UniProtKB-SubCell"/>
</dbReference>
<dbReference type="GO" id="GO:0048476">
    <property type="term" value="C:Holliday junction resolvase complex"/>
    <property type="evidence" value="ECO:0007669"/>
    <property type="project" value="UniProtKB-UniRule"/>
</dbReference>
<dbReference type="GO" id="GO:0008821">
    <property type="term" value="F:crossover junction DNA endonuclease activity"/>
    <property type="evidence" value="ECO:0007669"/>
    <property type="project" value="UniProtKB-UniRule"/>
</dbReference>
<dbReference type="GO" id="GO:0003677">
    <property type="term" value="F:DNA binding"/>
    <property type="evidence" value="ECO:0007669"/>
    <property type="project" value="UniProtKB-KW"/>
</dbReference>
<dbReference type="GO" id="GO:0000287">
    <property type="term" value="F:magnesium ion binding"/>
    <property type="evidence" value="ECO:0007669"/>
    <property type="project" value="UniProtKB-UniRule"/>
</dbReference>
<dbReference type="GO" id="GO:0006310">
    <property type="term" value="P:DNA recombination"/>
    <property type="evidence" value="ECO:0007669"/>
    <property type="project" value="UniProtKB-UniRule"/>
</dbReference>
<dbReference type="GO" id="GO:0006281">
    <property type="term" value="P:DNA repair"/>
    <property type="evidence" value="ECO:0007669"/>
    <property type="project" value="UniProtKB-UniRule"/>
</dbReference>
<dbReference type="CDD" id="cd16962">
    <property type="entry name" value="RuvC"/>
    <property type="match status" value="1"/>
</dbReference>
<dbReference type="FunFam" id="3.30.420.10:FF:000002">
    <property type="entry name" value="Crossover junction endodeoxyribonuclease RuvC"/>
    <property type="match status" value="1"/>
</dbReference>
<dbReference type="Gene3D" id="3.30.420.10">
    <property type="entry name" value="Ribonuclease H-like superfamily/Ribonuclease H"/>
    <property type="match status" value="1"/>
</dbReference>
<dbReference type="HAMAP" id="MF_00034">
    <property type="entry name" value="RuvC"/>
    <property type="match status" value="1"/>
</dbReference>
<dbReference type="InterPro" id="IPR012337">
    <property type="entry name" value="RNaseH-like_sf"/>
</dbReference>
<dbReference type="InterPro" id="IPR036397">
    <property type="entry name" value="RNaseH_sf"/>
</dbReference>
<dbReference type="InterPro" id="IPR020563">
    <property type="entry name" value="X-over_junc_endoDNase_Mg_BS"/>
</dbReference>
<dbReference type="InterPro" id="IPR002176">
    <property type="entry name" value="X-over_junc_endoDNase_RuvC"/>
</dbReference>
<dbReference type="NCBIfam" id="TIGR00228">
    <property type="entry name" value="ruvC"/>
    <property type="match status" value="1"/>
</dbReference>
<dbReference type="PANTHER" id="PTHR30194">
    <property type="entry name" value="CROSSOVER JUNCTION ENDODEOXYRIBONUCLEASE RUVC"/>
    <property type="match status" value="1"/>
</dbReference>
<dbReference type="PANTHER" id="PTHR30194:SF3">
    <property type="entry name" value="CROSSOVER JUNCTION ENDODEOXYRIBONUCLEASE RUVC"/>
    <property type="match status" value="1"/>
</dbReference>
<dbReference type="Pfam" id="PF02075">
    <property type="entry name" value="RuvC"/>
    <property type="match status" value="1"/>
</dbReference>
<dbReference type="PRINTS" id="PR00696">
    <property type="entry name" value="RSOLVASERUVC"/>
</dbReference>
<dbReference type="SUPFAM" id="SSF53098">
    <property type="entry name" value="Ribonuclease H-like"/>
    <property type="match status" value="1"/>
</dbReference>
<dbReference type="PROSITE" id="PS01321">
    <property type="entry name" value="RUVC"/>
    <property type="match status" value="1"/>
</dbReference>
<reference key="1">
    <citation type="journal article" date="2005" name="Proc. Natl. Acad. Sci. U.S.A.">
        <title>The complete genome sequence of Mycobacterium avium subspecies paratuberculosis.</title>
        <authorList>
            <person name="Li L."/>
            <person name="Bannantine J.P."/>
            <person name="Zhang Q."/>
            <person name="Amonsin A."/>
            <person name="May B.J."/>
            <person name="Alt D."/>
            <person name="Banerji N."/>
            <person name="Kanjilal S."/>
            <person name="Kapur V."/>
        </authorList>
    </citation>
    <scope>NUCLEOTIDE SEQUENCE [LARGE SCALE GENOMIC DNA]</scope>
    <source>
        <strain>ATCC BAA-968 / K-10</strain>
    </source>
</reference>
<name>RUVC_MYCPA</name>
<keyword id="KW-0963">Cytoplasm</keyword>
<keyword id="KW-0227">DNA damage</keyword>
<keyword id="KW-0233">DNA recombination</keyword>
<keyword id="KW-0234">DNA repair</keyword>
<keyword id="KW-0238">DNA-binding</keyword>
<keyword id="KW-0255">Endonuclease</keyword>
<keyword id="KW-0378">Hydrolase</keyword>
<keyword id="KW-0460">Magnesium</keyword>
<keyword id="KW-0479">Metal-binding</keyword>
<keyword id="KW-0540">Nuclease</keyword>
<keyword id="KW-1185">Reference proteome</keyword>
<protein>
    <recommendedName>
        <fullName evidence="1">Crossover junction endodeoxyribonuclease RuvC</fullName>
        <ecNumber evidence="1">3.1.21.10</ecNumber>
    </recommendedName>
    <alternativeName>
        <fullName evidence="1">Holliday junction nuclease RuvC</fullName>
    </alternativeName>
    <alternativeName>
        <fullName evidence="1">Holliday junction resolvase RuvC</fullName>
    </alternativeName>
</protein>
<feature type="chain" id="PRO_0000225153" description="Crossover junction endodeoxyribonuclease RuvC">
    <location>
        <begin position="1"/>
        <end position="188"/>
    </location>
</feature>
<feature type="active site" evidence="1">
    <location>
        <position position="7"/>
    </location>
</feature>
<feature type="active site" evidence="1">
    <location>
        <position position="68"/>
    </location>
</feature>
<feature type="active site" evidence="1">
    <location>
        <position position="141"/>
    </location>
</feature>
<feature type="binding site" evidence="1">
    <location>
        <position position="7"/>
    </location>
    <ligand>
        <name>Mg(2+)</name>
        <dbReference type="ChEBI" id="CHEBI:18420"/>
        <label>1</label>
    </ligand>
</feature>
<feature type="binding site" evidence="1">
    <location>
        <position position="68"/>
    </location>
    <ligand>
        <name>Mg(2+)</name>
        <dbReference type="ChEBI" id="CHEBI:18420"/>
        <label>2</label>
    </ligand>
</feature>
<feature type="binding site" evidence="1">
    <location>
        <position position="141"/>
    </location>
    <ligand>
        <name>Mg(2+)</name>
        <dbReference type="ChEBI" id="CHEBI:18420"/>
        <label>1</label>
    </ligand>
</feature>
<gene>
    <name evidence="1" type="primary">ruvC</name>
    <name type="ordered locus">MAP_1036</name>
</gene>
<evidence type="ECO:0000255" key="1">
    <source>
        <dbReference type="HAMAP-Rule" id="MF_00034"/>
    </source>
</evidence>
<organism>
    <name type="scientific">Mycolicibacterium paratuberculosis (strain ATCC BAA-968 / K-10)</name>
    <name type="common">Mycobacterium paratuberculosis</name>
    <dbReference type="NCBI Taxonomy" id="262316"/>
    <lineage>
        <taxon>Bacteria</taxon>
        <taxon>Bacillati</taxon>
        <taxon>Actinomycetota</taxon>
        <taxon>Actinomycetes</taxon>
        <taxon>Mycobacteriales</taxon>
        <taxon>Mycobacteriaceae</taxon>
        <taxon>Mycobacterium</taxon>
        <taxon>Mycobacterium avium complex (MAC)</taxon>
    </lineage>
</organism>
<sequence>MRVMGVDPGLTRCGLSVVESGRGRTVVALDVDVVRTPSDAPLAERLLSISDAVEHWLATHQPDVVAIERVFSQLNVTTVMGTAQAGGVVALAAAKRGIGVHFHTPSEVKAAVTGNGAANKAQVTAMVTRILALQAKPTPADAADALALAICHCWRAPMIARMARAEALAAQQRQKYKDKVDATLRAAR</sequence>
<comment type="function">
    <text evidence="1">The RuvA-RuvB-RuvC complex processes Holliday junction (HJ) DNA during genetic recombination and DNA repair. Endonuclease that resolves HJ intermediates. Cleaves cruciform DNA by making single-stranded nicks across the HJ at symmetrical positions within the homologous arms, yielding a 5'-phosphate and a 3'-hydroxyl group; requires a central core of homology in the junction. The consensus cleavage sequence is 5'-(A/T)TT(C/G)-3'. Cleavage occurs on the 3'-side of the TT dinucleotide at the point of strand exchange. HJ branch migration catalyzed by RuvA-RuvB allows RuvC to scan DNA until it finds its consensus sequence, where it cleaves and resolves the cruciform DNA.</text>
</comment>
<comment type="catalytic activity">
    <reaction evidence="1">
        <text>Endonucleolytic cleavage at a junction such as a reciprocal single-stranded crossover between two homologous DNA duplexes (Holliday junction).</text>
        <dbReference type="EC" id="3.1.21.10"/>
    </reaction>
</comment>
<comment type="cofactor">
    <cofactor evidence="1">
        <name>Mg(2+)</name>
        <dbReference type="ChEBI" id="CHEBI:18420"/>
    </cofactor>
    <text evidence="1">Binds 2 Mg(2+) ion per subunit.</text>
</comment>
<comment type="subunit">
    <text evidence="1">Homodimer which binds Holliday junction (HJ) DNA. The HJ becomes 2-fold symmetrical on binding to RuvC with unstacked arms; it has a different conformation from HJ DNA in complex with RuvA. In the full resolvosome a probable DNA-RuvA(4)-RuvB(12)-RuvC(2) complex forms which resolves the HJ.</text>
</comment>
<comment type="subcellular location">
    <subcellularLocation>
        <location evidence="1">Cytoplasm</location>
    </subcellularLocation>
</comment>
<comment type="similarity">
    <text evidence="1">Belongs to the RuvC family.</text>
</comment>